<name>CBF3C_YEAST</name>
<feature type="initiator methionine" description="Removed" evidence="3">
    <location>
        <position position="1"/>
    </location>
</feature>
<feature type="chain" id="PRO_0000089370" description="Centromere DNA-binding protein complex CBF3 subunit C">
    <location>
        <begin position="2"/>
        <end position="478"/>
    </location>
</feature>
<feature type="region of interest" description="Disordered" evidence="1">
    <location>
        <begin position="206"/>
        <end position="251"/>
    </location>
</feature>
<feature type="compositionally biased region" description="Polar residues" evidence="1">
    <location>
        <begin position="217"/>
        <end position="230"/>
    </location>
</feature>
<feature type="compositionally biased region" description="Basic residues" evidence="1">
    <location>
        <begin position="231"/>
        <end position="240"/>
    </location>
</feature>
<feature type="helix" evidence="4">
    <location>
        <begin position="6"/>
        <end position="11"/>
    </location>
</feature>
<feature type="helix" evidence="4">
    <location>
        <begin position="14"/>
        <end position="23"/>
    </location>
</feature>
<feature type="turn" evidence="4">
    <location>
        <begin position="36"/>
        <end position="40"/>
    </location>
</feature>
<feature type="strand" evidence="4">
    <location>
        <begin position="43"/>
        <end position="46"/>
    </location>
</feature>
<feature type="helix" evidence="4">
    <location>
        <begin position="59"/>
        <end position="65"/>
    </location>
</feature>
<feature type="turn" evidence="4">
    <location>
        <begin position="66"/>
        <end position="70"/>
    </location>
</feature>
<feature type="helix" evidence="4">
    <location>
        <begin position="71"/>
        <end position="74"/>
    </location>
</feature>
<feature type="helix" evidence="4">
    <location>
        <begin position="75"/>
        <end position="77"/>
    </location>
</feature>
<feature type="helix" evidence="4">
    <location>
        <begin position="82"/>
        <end position="93"/>
    </location>
</feature>
<feature type="helix" evidence="4">
    <location>
        <begin position="98"/>
        <end position="108"/>
    </location>
</feature>
<feature type="turn" evidence="4">
    <location>
        <begin position="109"/>
        <end position="111"/>
    </location>
</feature>
<feature type="strand" evidence="4">
    <location>
        <begin position="129"/>
        <end position="132"/>
    </location>
</feature>
<feature type="strand" evidence="4">
    <location>
        <begin position="138"/>
        <end position="140"/>
    </location>
</feature>
<feature type="helix" evidence="4">
    <location>
        <begin position="144"/>
        <end position="150"/>
    </location>
</feature>
<feature type="helix" evidence="4">
    <location>
        <begin position="152"/>
        <end position="155"/>
    </location>
</feature>
<feature type="helix" evidence="4">
    <location>
        <begin position="177"/>
        <end position="189"/>
    </location>
</feature>
<feature type="turn" evidence="4">
    <location>
        <begin position="193"/>
        <end position="195"/>
    </location>
</feature>
<feature type="strand" evidence="4">
    <location>
        <begin position="196"/>
        <end position="198"/>
    </location>
</feature>
<feature type="helix" evidence="4">
    <location>
        <begin position="258"/>
        <end position="265"/>
    </location>
</feature>
<feature type="strand" evidence="4">
    <location>
        <begin position="276"/>
        <end position="278"/>
    </location>
</feature>
<feature type="helix" evidence="4">
    <location>
        <begin position="284"/>
        <end position="287"/>
    </location>
</feature>
<feature type="strand" evidence="4">
    <location>
        <begin position="297"/>
        <end position="300"/>
    </location>
</feature>
<feature type="turn" evidence="4">
    <location>
        <begin position="303"/>
        <end position="308"/>
    </location>
</feature>
<feature type="strand" evidence="4">
    <location>
        <begin position="311"/>
        <end position="314"/>
    </location>
</feature>
<feature type="strand" evidence="4">
    <location>
        <begin position="318"/>
        <end position="320"/>
    </location>
</feature>
<feature type="strand" evidence="4">
    <location>
        <begin position="322"/>
        <end position="324"/>
    </location>
</feature>
<feature type="strand" evidence="4">
    <location>
        <begin position="336"/>
        <end position="339"/>
    </location>
</feature>
<feature type="strand" evidence="4">
    <location>
        <begin position="343"/>
        <end position="345"/>
    </location>
</feature>
<feature type="helix" evidence="4">
    <location>
        <begin position="347"/>
        <end position="349"/>
    </location>
</feature>
<feature type="strand" evidence="4">
    <location>
        <begin position="358"/>
        <end position="361"/>
    </location>
</feature>
<feature type="strand" evidence="4">
    <location>
        <begin position="365"/>
        <end position="367"/>
    </location>
</feature>
<feature type="helix" evidence="4">
    <location>
        <begin position="372"/>
        <end position="379"/>
    </location>
</feature>
<feature type="helix" evidence="4">
    <location>
        <begin position="384"/>
        <end position="390"/>
    </location>
</feature>
<feature type="turn" evidence="4">
    <location>
        <begin position="400"/>
        <end position="402"/>
    </location>
</feature>
<feature type="strand" evidence="4">
    <location>
        <begin position="406"/>
        <end position="408"/>
    </location>
</feature>
<feature type="strand" evidence="4">
    <location>
        <begin position="411"/>
        <end position="413"/>
    </location>
</feature>
<feature type="strand" evidence="4">
    <location>
        <begin position="415"/>
        <end position="418"/>
    </location>
</feature>
<feature type="strand" evidence="4">
    <location>
        <begin position="420"/>
        <end position="423"/>
    </location>
</feature>
<feature type="helix" evidence="4">
    <location>
        <begin position="424"/>
        <end position="434"/>
    </location>
</feature>
<feature type="strand" evidence="4">
    <location>
        <begin position="448"/>
        <end position="450"/>
    </location>
</feature>
<feature type="strand" evidence="4">
    <location>
        <begin position="452"/>
        <end position="455"/>
    </location>
</feature>
<feature type="helix" evidence="4">
    <location>
        <begin position="456"/>
        <end position="459"/>
    </location>
</feature>
<feature type="helix" evidence="4">
    <location>
        <begin position="460"/>
        <end position="462"/>
    </location>
</feature>
<feature type="strand" evidence="4">
    <location>
        <begin position="475"/>
        <end position="478"/>
    </location>
</feature>
<keyword id="KW-0002">3D-structure</keyword>
<keyword id="KW-0137">Centromere</keyword>
<keyword id="KW-0158">Chromosome</keyword>
<keyword id="KW-0903">Direct protein sequencing</keyword>
<keyword id="KW-0238">DNA-binding</keyword>
<keyword id="KW-0539">Nucleus</keyword>
<keyword id="KW-1185">Reference proteome</keyword>
<accession>P35203</accession>
<accession>D6VZR7</accession>
<evidence type="ECO:0000256" key="1">
    <source>
        <dbReference type="SAM" id="MobiDB-lite"/>
    </source>
</evidence>
<evidence type="ECO:0000269" key="2">
    <source>
    </source>
</evidence>
<evidence type="ECO:0000269" key="3">
    <source>
    </source>
</evidence>
<evidence type="ECO:0007829" key="4">
    <source>
        <dbReference type="PDB" id="6GYU"/>
    </source>
</evidence>
<gene>
    <name type="primary">CTF13</name>
    <name type="synonym">CBF3C</name>
    <name type="ordered locus">YMR094W</name>
    <name type="ORF">YM6543.01</name>
    <name type="ORF">YM9582.19</name>
</gene>
<reference key="1">
    <citation type="journal article" date="1993" name="Cell">
        <title>Identification of essential components of the S. cerevisiae kinetochore.</title>
        <authorList>
            <person name="Doheny K.F."/>
            <person name="Sorger P.K."/>
            <person name="Hyman A.A."/>
            <person name="Tugendreich S."/>
            <person name="Spencer F."/>
            <person name="Hieter P."/>
        </authorList>
    </citation>
    <scope>NUCLEOTIDE SEQUENCE [GENOMIC DNA]</scope>
    <source>
        <strain>ATCC 204508 / S288c</strain>
    </source>
</reference>
<reference key="2">
    <citation type="journal article" date="1997" name="Nature">
        <title>The nucleotide sequence of Saccharomyces cerevisiae chromosome XIII.</title>
        <authorList>
            <person name="Bowman S."/>
            <person name="Churcher C.M."/>
            <person name="Badcock K."/>
            <person name="Brown D."/>
            <person name="Chillingworth T."/>
            <person name="Connor R."/>
            <person name="Dedman K."/>
            <person name="Devlin K."/>
            <person name="Gentles S."/>
            <person name="Hamlin N."/>
            <person name="Hunt S."/>
            <person name="Jagels K."/>
            <person name="Lye G."/>
            <person name="Moule S."/>
            <person name="Odell C."/>
            <person name="Pearson D."/>
            <person name="Rajandream M.A."/>
            <person name="Rice P."/>
            <person name="Skelton J."/>
            <person name="Walsh S.V."/>
            <person name="Whitehead S."/>
            <person name="Barrell B.G."/>
        </authorList>
    </citation>
    <scope>NUCLEOTIDE SEQUENCE [LARGE SCALE GENOMIC DNA]</scope>
    <source>
        <strain>ATCC 204508 / S288c</strain>
    </source>
</reference>
<reference key="3">
    <citation type="journal article" date="2014" name="G3 (Bethesda)">
        <title>The reference genome sequence of Saccharomyces cerevisiae: Then and now.</title>
        <authorList>
            <person name="Engel S.R."/>
            <person name="Dietrich F.S."/>
            <person name="Fisk D.G."/>
            <person name="Binkley G."/>
            <person name="Balakrishnan R."/>
            <person name="Costanzo M.C."/>
            <person name="Dwight S.S."/>
            <person name="Hitz B.C."/>
            <person name="Karra K."/>
            <person name="Nash R.S."/>
            <person name="Weng S."/>
            <person name="Wong E.D."/>
            <person name="Lloyd P."/>
            <person name="Skrzypek M.S."/>
            <person name="Miyasato S.R."/>
            <person name="Simison M."/>
            <person name="Cherry J.M."/>
        </authorList>
    </citation>
    <scope>GENOME REANNOTATION</scope>
    <source>
        <strain>ATCC 204508 / S288c</strain>
    </source>
</reference>
<reference key="4">
    <citation type="journal article" date="1994" name="EMBO J.">
        <title>A zinc finger protein, essential for chromosome segregation, constitutes a putative DNA binding subunit of the Saccharomyces cerevisiae kinetochore complex, Cbf3.</title>
        <authorList>
            <person name="Lechner J."/>
        </authorList>
    </citation>
    <scope>PROTEIN SEQUENCE OF 2-8; 10-17 AND 342-349</scope>
</reference>
<reference key="5">
    <citation type="journal article" date="2004" name="Mol. Biol. Cell">
        <title>Sgt1p and Skp1p modulate the assembly and turnover of CBF3 complexes required for proper kinetochore function.</title>
        <authorList>
            <person name="Rodrigo-Brenni M.C."/>
            <person name="Thomas S."/>
            <person name="Bouck D.C."/>
            <person name="Kaplan K.B."/>
        </authorList>
    </citation>
    <scope>ASSEMBLY OF THE CBF3 COMPLEX</scope>
    <scope>INTERACTION WITH CBF3D AND SGT1</scope>
</reference>
<protein>
    <recommendedName>
        <fullName>Centromere DNA-binding protein complex CBF3 subunit C</fullName>
    </recommendedName>
    <alternativeName>
        <fullName>Chromosome transmission fidelity protein 13</fullName>
    </alternativeName>
    <alternativeName>
        <fullName>Kinetochore protein CTF13</fullName>
    </alternativeName>
</protein>
<proteinExistence type="evidence at protein level"/>
<dbReference type="EMBL" id="L10063">
    <property type="protein sequence ID" value="AAA34536.1"/>
    <property type="molecule type" value="Genomic_DNA"/>
</dbReference>
<dbReference type="EMBL" id="Z49259">
    <property type="protein sequence ID" value="CAA89241.1"/>
    <property type="molecule type" value="Genomic_DNA"/>
</dbReference>
<dbReference type="EMBL" id="Z49807">
    <property type="protein sequence ID" value="CAA89895.1"/>
    <property type="molecule type" value="Genomic_DNA"/>
</dbReference>
<dbReference type="EMBL" id="BK006946">
    <property type="protein sequence ID" value="DAA09991.1"/>
    <property type="molecule type" value="Genomic_DNA"/>
</dbReference>
<dbReference type="PIR" id="A40747">
    <property type="entry name" value="A40747"/>
</dbReference>
<dbReference type="RefSeq" id="NP_013812.1">
    <property type="nucleotide sequence ID" value="NM_001182594.1"/>
</dbReference>
<dbReference type="PDB" id="6FE8">
    <property type="method" value="EM"/>
    <property type="resolution" value="3.70 A"/>
    <property type="chains" value="D=2-478"/>
</dbReference>
<dbReference type="PDB" id="6GSA">
    <property type="method" value="EM"/>
    <property type="resolution" value="4.20 A"/>
    <property type="chains" value="D=2-478"/>
</dbReference>
<dbReference type="PDB" id="6GYP">
    <property type="method" value="EM"/>
    <property type="resolution" value="3.60 A"/>
    <property type="chains" value="A=1-478"/>
</dbReference>
<dbReference type="PDB" id="6GYS">
    <property type="method" value="EM"/>
    <property type="resolution" value="4.40 A"/>
    <property type="chains" value="A/H=1-478"/>
</dbReference>
<dbReference type="PDB" id="6GYU">
    <property type="method" value="EM"/>
    <property type="resolution" value="3.00 A"/>
    <property type="chains" value="A=1-478"/>
</dbReference>
<dbReference type="PDB" id="7K79">
    <property type="method" value="EM"/>
    <property type="resolution" value="4.00 A"/>
    <property type="chains" value="K=2-478"/>
</dbReference>
<dbReference type="PDB" id="8OW1">
    <property type="method" value="EM"/>
    <property type="resolution" value="3.70 A"/>
    <property type="chains" value="CT=1-478"/>
</dbReference>
<dbReference type="PDBsum" id="6FE8"/>
<dbReference type="PDBsum" id="6GSA"/>
<dbReference type="PDBsum" id="6GYP"/>
<dbReference type="PDBsum" id="6GYS"/>
<dbReference type="PDBsum" id="6GYU"/>
<dbReference type="PDBsum" id="7K79"/>
<dbReference type="PDBsum" id="8OW1"/>
<dbReference type="EMDB" id="EMD-0051"/>
<dbReference type="EMDB" id="EMD-0095"/>
<dbReference type="EMDB" id="EMD-0096"/>
<dbReference type="EMDB" id="EMD-0097"/>
<dbReference type="EMDB" id="EMD-17227"/>
<dbReference type="EMDB" id="EMD-22697"/>
<dbReference type="EMDB" id="EMD-4241"/>
<dbReference type="SMR" id="P35203"/>
<dbReference type="BioGRID" id="35269">
    <property type="interactions" value="199"/>
</dbReference>
<dbReference type="ComplexPortal" id="CPX-1898">
    <property type="entry name" value="CBF3 complex"/>
</dbReference>
<dbReference type="DIP" id="DIP-1277N"/>
<dbReference type="FunCoup" id="P35203">
    <property type="interactions" value="135"/>
</dbReference>
<dbReference type="IntAct" id="P35203">
    <property type="interactions" value="12"/>
</dbReference>
<dbReference type="MINT" id="P35203"/>
<dbReference type="STRING" id="4932.YMR094W"/>
<dbReference type="iPTMnet" id="P35203"/>
<dbReference type="PaxDb" id="4932-YMR094W"/>
<dbReference type="PeptideAtlas" id="P35203"/>
<dbReference type="EnsemblFungi" id="YMR094W_mRNA">
    <property type="protein sequence ID" value="YMR094W"/>
    <property type="gene ID" value="YMR094W"/>
</dbReference>
<dbReference type="GeneID" id="855119"/>
<dbReference type="KEGG" id="sce:YMR094W"/>
<dbReference type="AGR" id="SGD:S000004700"/>
<dbReference type="SGD" id="S000004700">
    <property type="gene designation" value="CTF13"/>
</dbReference>
<dbReference type="VEuPathDB" id="FungiDB:YMR094W"/>
<dbReference type="eggNOG" id="ENOG502QRJV">
    <property type="taxonomic scope" value="Eukaryota"/>
</dbReference>
<dbReference type="HOGENOM" id="CLU_046445_0_0_1"/>
<dbReference type="InParanoid" id="P35203"/>
<dbReference type="OMA" id="WYTFKEY"/>
<dbReference type="OrthoDB" id="4032425at2759"/>
<dbReference type="BioCyc" id="YEAST:G3O-32794-MONOMER"/>
<dbReference type="BioGRID-ORCS" id="855119">
    <property type="hits" value="0 hits in 10 CRISPR screens"/>
</dbReference>
<dbReference type="PRO" id="PR:P35203"/>
<dbReference type="Proteomes" id="UP000002311">
    <property type="component" value="Chromosome XIII"/>
</dbReference>
<dbReference type="RNAct" id="P35203">
    <property type="molecule type" value="protein"/>
</dbReference>
<dbReference type="GO" id="GO:0031518">
    <property type="term" value="C:CBF3 complex"/>
    <property type="evidence" value="ECO:0000314"/>
    <property type="project" value="SGD"/>
</dbReference>
<dbReference type="GO" id="GO:0000776">
    <property type="term" value="C:kinetochore"/>
    <property type="evidence" value="ECO:0000314"/>
    <property type="project" value="ComplexPortal"/>
</dbReference>
<dbReference type="GO" id="GO:0008301">
    <property type="term" value="F:DNA binding, bending"/>
    <property type="evidence" value="ECO:0000314"/>
    <property type="project" value="SGD"/>
</dbReference>
<dbReference type="GO" id="GO:0051382">
    <property type="term" value="P:kinetochore assembly"/>
    <property type="evidence" value="ECO:0000314"/>
    <property type="project" value="SGD"/>
</dbReference>
<dbReference type="GO" id="GO:0000921">
    <property type="term" value="P:septin ring assembly"/>
    <property type="evidence" value="ECO:0000315"/>
    <property type="project" value="SGD"/>
</dbReference>
<dbReference type="CDD" id="cd19611">
    <property type="entry name" value="Ctf13_LRR_LRR-insertion"/>
    <property type="match status" value="1"/>
</dbReference>
<dbReference type="Gene3D" id="3.80.10.10">
    <property type="entry name" value="Ribonuclease Inhibitor"/>
    <property type="match status" value="1"/>
</dbReference>
<dbReference type="InterPro" id="IPR032675">
    <property type="entry name" value="LRR_dom_sf"/>
</dbReference>
<organism>
    <name type="scientific">Saccharomyces cerevisiae (strain ATCC 204508 / S288c)</name>
    <name type="common">Baker's yeast</name>
    <dbReference type="NCBI Taxonomy" id="559292"/>
    <lineage>
        <taxon>Eukaryota</taxon>
        <taxon>Fungi</taxon>
        <taxon>Dikarya</taxon>
        <taxon>Ascomycota</taxon>
        <taxon>Saccharomycotina</taxon>
        <taxon>Saccharomycetes</taxon>
        <taxon>Saccharomycetales</taxon>
        <taxon>Saccharomycetaceae</taxon>
        <taxon>Saccharomyces</taxon>
    </lineage>
</organism>
<comment type="function">
    <text>Acts as a central component of the centromere DNA-binding protein complex CBF3, which is essential for chromosome segregation and movement of centromeres along microtubules. CBF3 is required for the recruitment of other kinetochore complexes to CEN DNA. It plays a role in the attachment of chromosomes to the spindle and binds selectively to a highly conserved DNA sequence called CDEIII, found in centromers and in several promoters. The association of CBF3C with CBF3D and SGT1 is required for CBF3C activation and CBF3 assembly.</text>
</comment>
<comment type="subunit">
    <text evidence="2">Component of the CBF3 copmplex, which is formed of CBF3A/CBF2, CBF3B/CEP3, CBF3C/CTF13 and CBF3D. CBF3C interacts with CBF3D and SGT1.</text>
</comment>
<comment type="interaction">
    <interactant intactId="EBI-4085">
        <id>P35203</id>
    </interactant>
    <interactant intactId="EBI-4069">
        <id>P32504</id>
        <label>CBF2</label>
    </interactant>
    <organismsDiffer>false</organismsDiffer>
    <experiments>5</experiments>
</comment>
<comment type="interaction">
    <interactant intactId="EBI-4085">
        <id>P35203</id>
    </interactant>
    <interactant intactId="EBI-4077">
        <id>P40969</id>
        <label>CEP3</label>
    </interactant>
    <organismsDiffer>false</organismsDiffer>
    <experiments>3</experiments>
</comment>
<comment type="interaction">
    <interactant intactId="EBI-4085">
        <id>P35203</id>
    </interactant>
    <interactant intactId="EBI-23268">
        <id>P53267</id>
        <label>DAM1</label>
    </interactant>
    <organismsDiffer>false</organismsDiffer>
    <experiments>2</experiments>
</comment>
<comment type="interaction">
    <interactant intactId="EBI-4085">
        <id>P35203</id>
    </interactant>
    <interactant intactId="EBI-17070">
        <id>Q08446</id>
        <label>SGT1</label>
    </interactant>
    <organismsDiffer>false</organismsDiffer>
    <experiments>3</experiments>
</comment>
<comment type="interaction">
    <interactant intactId="EBI-4085">
        <id>P35203</id>
    </interactant>
    <interactant intactId="EBI-4090">
        <id>P52286</id>
        <label>SKP1</label>
    </interactant>
    <organismsDiffer>false</organismsDiffer>
    <experiments>8</experiments>
</comment>
<comment type="subcellular location">
    <subcellularLocation>
        <location>Nucleus</location>
    </subcellularLocation>
    <subcellularLocation>
        <location>Chromosome</location>
        <location>Centromere</location>
    </subcellularLocation>
</comment>
<sequence length="478" mass="56336">MPSFNPVRFLELPIDIRKEVYFHLDGNFCGAHPYPIDILYKSNDVELPGKPSYKRSKRSKKLLRYMYPVFATYLNIFEYSPQLIEKWLEYAFWLRYDCLVLDCFKVNHLYDGTLIDALEWTYLDNELRLAYFNKASMLEVWYTFKEYKKWVIDSVAFDELDLLNVSNIQFNIDNLTPQLVDKCLSILEQKDLFATIGEVQFGQDEEVGEEKDVDVSGANSDENSSPSSTIKNKKRSASKRSHSDNGNVGATHNQLTSISVIRTIRSMESMKSLRKITVRGEKLYELLINFHGFRDNPGKTISYIVKRRINEIRLSRMNQISRTGLADFTRWDNLQKLVLSRVAYIDLNSIVFPKNFKSLTMKRVSKIKWWNIEENILKELKVDKRTFKSLYIKEDDSKFTKFFNLRHTRIKELDKSEINQITYLRCQAIVWLSFRTLNHIKLQNVSEVFNNIIVPRALFDSKRVEIYRCEKISQVLVI</sequence>